<reference key="1">
    <citation type="journal article" date="1998" name="Science">
        <title>Genome sequence of an obligate intracellular pathogen of humans: Chlamydia trachomatis.</title>
        <authorList>
            <person name="Stephens R.S."/>
            <person name="Kalman S."/>
            <person name="Lammel C.J."/>
            <person name="Fan J."/>
            <person name="Marathe R."/>
            <person name="Aravind L."/>
            <person name="Mitchell W.P."/>
            <person name="Olinger L."/>
            <person name="Tatusov R.L."/>
            <person name="Zhao Q."/>
            <person name="Koonin E.V."/>
            <person name="Davis R.W."/>
        </authorList>
    </citation>
    <scope>NUCLEOTIDE SEQUENCE [LARGE SCALE GENOMIC DNA]</scope>
    <source>
        <strain>ATCC VR-885 / DSM 19411 / UW-3/Cx</strain>
    </source>
</reference>
<feature type="chain" id="PRO_0000161465" description="tRNA uridine(34) hydroxylase">
    <location>
        <begin position="1"/>
        <end position="327"/>
    </location>
</feature>
<feature type="domain" description="Rhodanese" evidence="1">
    <location>
        <begin position="122"/>
        <end position="218"/>
    </location>
</feature>
<feature type="active site" description="Cysteine persulfide intermediate" evidence="1">
    <location>
        <position position="178"/>
    </location>
</feature>
<dbReference type="EC" id="1.14.-.-" evidence="1"/>
<dbReference type="EMBL" id="AE001273">
    <property type="protein sequence ID" value="AAC68231.1"/>
    <property type="molecule type" value="Genomic_DNA"/>
</dbReference>
<dbReference type="PIR" id="D71491">
    <property type="entry name" value="D71491"/>
</dbReference>
<dbReference type="RefSeq" id="WP_009871996.1">
    <property type="nucleotide sequence ID" value="NC_000117.1"/>
</dbReference>
<dbReference type="SMR" id="O84632"/>
<dbReference type="FunCoup" id="O84632">
    <property type="interactions" value="171"/>
</dbReference>
<dbReference type="STRING" id="272561.CT_627"/>
<dbReference type="EnsemblBacteria" id="AAC68231">
    <property type="protein sequence ID" value="AAC68231"/>
    <property type="gene ID" value="CT_627"/>
</dbReference>
<dbReference type="KEGG" id="ctr:CT_627"/>
<dbReference type="PATRIC" id="fig|272561.5.peg.686"/>
<dbReference type="HOGENOM" id="CLU_038878_1_0_0"/>
<dbReference type="InParanoid" id="O84632"/>
<dbReference type="OrthoDB" id="9778326at2"/>
<dbReference type="Proteomes" id="UP000000431">
    <property type="component" value="Chromosome"/>
</dbReference>
<dbReference type="GO" id="GO:0016705">
    <property type="term" value="F:oxidoreductase activity, acting on paired donors, with incorporation or reduction of molecular oxygen"/>
    <property type="evidence" value="ECO:0007669"/>
    <property type="project" value="UniProtKB-UniRule"/>
</dbReference>
<dbReference type="GO" id="GO:0006400">
    <property type="term" value="P:tRNA modification"/>
    <property type="evidence" value="ECO:0007669"/>
    <property type="project" value="UniProtKB-UniRule"/>
</dbReference>
<dbReference type="CDD" id="cd01518">
    <property type="entry name" value="RHOD_YceA"/>
    <property type="match status" value="1"/>
</dbReference>
<dbReference type="Gene3D" id="3.30.70.100">
    <property type="match status" value="1"/>
</dbReference>
<dbReference type="Gene3D" id="3.40.250.10">
    <property type="entry name" value="Rhodanese-like domain"/>
    <property type="match status" value="1"/>
</dbReference>
<dbReference type="HAMAP" id="MF_00469">
    <property type="entry name" value="TrhO"/>
    <property type="match status" value="1"/>
</dbReference>
<dbReference type="InterPro" id="IPR001763">
    <property type="entry name" value="Rhodanese-like_dom"/>
</dbReference>
<dbReference type="InterPro" id="IPR036873">
    <property type="entry name" value="Rhodanese-like_dom_sf"/>
</dbReference>
<dbReference type="InterPro" id="IPR022111">
    <property type="entry name" value="Rhodanese_C"/>
</dbReference>
<dbReference type="InterPro" id="IPR020936">
    <property type="entry name" value="TrhO"/>
</dbReference>
<dbReference type="InterPro" id="IPR040503">
    <property type="entry name" value="TRHO_N"/>
</dbReference>
<dbReference type="NCBIfam" id="NF001134">
    <property type="entry name" value="PRK00142.1-2"/>
    <property type="match status" value="1"/>
</dbReference>
<dbReference type="NCBIfam" id="NF001135">
    <property type="entry name" value="PRK00142.1-3"/>
    <property type="match status" value="1"/>
</dbReference>
<dbReference type="PANTHER" id="PTHR43268:SF3">
    <property type="entry name" value="RHODANESE-LIKE DOMAIN-CONTAINING PROTEIN 7-RELATED"/>
    <property type="match status" value="1"/>
</dbReference>
<dbReference type="PANTHER" id="PTHR43268">
    <property type="entry name" value="THIOSULFATE SULFURTRANSFERASE/RHODANESE-LIKE DOMAIN-CONTAINING PROTEIN 2"/>
    <property type="match status" value="1"/>
</dbReference>
<dbReference type="Pfam" id="PF00581">
    <property type="entry name" value="Rhodanese"/>
    <property type="match status" value="1"/>
</dbReference>
<dbReference type="Pfam" id="PF12368">
    <property type="entry name" value="Rhodanese_C"/>
    <property type="match status" value="1"/>
</dbReference>
<dbReference type="Pfam" id="PF17773">
    <property type="entry name" value="UPF0176_N"/>
    <property type="match status" value="1"/>
</dbReference>
<dbReference type="SMART" id="SM00450">
    <property type="entry name" value="RHOD"/>
    <property type="match status" value="1"/>
</dbReference>
<dbReference type="SUPFAM" id="SSF52821">
    <property type="entry name" value="Rhodanese/Cell cycle control phosphatase"/>
    <property type="match status" value="1"/>
</dbReference>
<dbReference type="PROSITE" id="PS50206">
    <property type="entry name" value="RHODANESE_3"/>
    <property type="match status" value="1"/>
</dbReference>
<organism>
    <name type="scientific">Chlamydia trachomatis serovar D (strain ATCC VR-885 / DSM 19411 / UW-3/Cx)</name>
    <dbReference type="NCBI Taxonomy" id="272561"/>
    <lineage>
        <taxon>Bacteria</taxon>
        <taxon>Pseudomonadati</taxon>
        <taxon>Chlamydiota</taxon>
        <taxon>Chlamydiia</taxon>
        <taxon>Chlamydiales</taxon>
        <taxon>Chlamydiaceae</taxon>
        <taxon>Chlamydia/Chlamydophila group</taxon>
        <taxon>Chlamydia</taxon>
    </lineage>
</organism>
<sequence length="327" mass="37694">MEKNYYALAYYYFGPVSNPHEEIALHKQLFKTMDVSCRIYISEEGINGQFSGYQPDAERYMAWLKQRPDFASIKFKIHHIEENIFPRVTVKYRKELVALGCSVDTTKQGKHISPEEWHEKLQENRCLVLDVRNNYEWKIGHFENAVLPDIETFREFPDYADRLAKEHDPAKTPVMMYCTGGIRCELYSALLLEKGFKEVYQLDGGVIAYGLKMGTGKWRGKLFVFDDRMAMPIDEADPNVSPIARCSLCNTDSDTYYNCANTDCNNLFICCESCIATHKGCCSEECSQAPRIRAFSAERGNKPFRRKHLCPTIEQSCCLKEQENQPA</sequence>
<proteinExistence type="inferred from homology"/>
<comment type="function">
    <text evidence="1">Catalyzes oxygen-dependent 5-hydroxyuridine (ho5U) modification at position 34 in tRNAs.</text>
</comment>
<comment type="catalytic activity">
    <reaction evidence="1">
        <text>uridine(34) in tRNA + AH2 + O2 = 5-hydroxyuridine(34) in tRNA + A + H2O</text>
        <dbReference type="Rhea" id="RHEA:64224"/>
        <dbReference type="Rhea" id="RHEA-COMP:11727"/>
        <dbReference type="Rhea" id="RHEA-COMP:13381"/>
        <dbReference type="ChEBI" id="CHEBI:13193"/>
        <dbReference type="ChEBI" id="CHEBI:15377"/>
        <dbReference type="ChEBI" id="CHEBI:15379"/>
        <dbReference type="ChEBI" id="CHEBI:17499"/>
        <dbReference type="ChEBI" id="CHEBI:65315"/>
        <dbReference type="ChEBI" id="CHEBI:136877"/>
    </reaction>
</comment>
<comment type="similarity">
    <text evidence="1">Belongs to the TrhO family.</text>
</comment>
<keyword id="KW-0560">Oxidoreductase</keyword>
<keyword id="KW-1185">Reference proteome</keyword>
<keyword id="KW-0819">tRNA processing</keyword>
<protein>
    <recommendedName>
        <fullName evidence="1">tRNA uridine(34) hydroxylase</fullName>
        <ecNumber evidence="1">1.14.-.-</ecNumber>
    </recommendedName>
    <alternativeName>
        <fullName evidence="1">tRNA hydroxylation protein O</fullName>
    </alternativeName>
</protein>
<name>TRHO_CHLTR</name>
<evidence type="ECO:0000255" key="1">
    <source>
        <dbReference type="HAMAP-Rule" id="MF_00469"/>
    </source>
</evidence>
<accession>O84632</accession>
<gene>
    <name evidence="1" type="primary">trhO</name>
    <name type="ordered locus">CT_627</name>
</gene>